<evidence type="ECO:0000269" key="1">
    <source>
    </source>
</evidence>
<evidence type="ECO:0000269" key="2">
    <source>
    </source>
</evidence>
<evidence type="ECO:0000269" key="3">
    <source>
    </source>
</evidence>
<evidence type="ECO:0000269" key="4">
    <source>
    </source>
</evidence>
<evidence type="ECO:0000269" key="5">
    <source>
    </source>
</evidence>
<evidence type="ECO:0000269" key="6">
    <source>
    </source>
</evidence>
<evidence type="ECO:0000303" key="7">
    <source>
    </source>
</evidence>
<evidence type="ECO:0000305" key="8"/>
<evidence type="ECO:0000305" key="9">
    <source>
    </source>
</evidence>
<evidence type="ECO:0000305" key="10">
    <source>
    </source>
</evidence>
<comment type="function">
    <text evidence="9 10">Component of the mitochondrial ribosome (mitoribosome), a dedicated translation machinery responsible for the synthesis of mitochondrial genome-encoded proteins, including at least some of the essential transmembrane subunits of the mitochondrial respiratory chain. The mitoribosomes are attached to the mitochondrial inner membrane and translation products are cotranslationally integrated into the membrane.</text>
</comment>
<comment type="subunit">
    <text evidence="4 5">Component of the mitochondrial large ribosomal subunit (mt-LSU). Mature yeast 74S mitochondrial ribosomes consist of a small (37S) and a large (54S) subunit. The 37S small subunit contains a 15S ribosomal RNA (15S mt-rRNA) and 34 different proteins. The 54S large subunit contains a 21S rRNA (21S mt-rRNA) and 46 different proteins.</text>
</comment>
<comment type="subcellular location">
    <subcellularLocation>
        <location evidence="1 3">Mitochondrion</location>
    </subcellularLocation>
    <text evidence="6">Mitoribosomes are tethered to the mitochondrial inner membrane and spatially aligned with the membrane insertion machinery through two distinct membrane contact sites, formed by the 21S rRNA expansion segment 96-ES1 and the inner membrane protein MBA1.</text>
</comment>
<comment type="miscellaneous">
    <text evidence="2">Present with 1550 molecules/cell in log phase SD medium.</text>
</comment>
<comment type="similarity">
    <text evidence="8">Belongs to the mitochondrion-specific ribosomal protein mL53 family.</text>
</comment>
<sequence>MITKYFSKVIVRFNPFGKEAKVARLVLAAIPPTQRNMGTQIQSEIISDYNKVKPLVKVTYKDKKEMEVDPSNMNFQELANHFDRHSKQLDLKHMLEMH</sequence>
<gene>
    <name type="primary">MRPL44</name>
    <name type="synonym">YMR44</name>
    <name type="ordered locus">YMR225C</name>
    <name type="ORF">YM9959.07C</name>
</gene>
<name>RM44_YEAST</name>
<reference key="1">
    <citation type="journal article" date="1989" name="Mol. Gen. Genet.">
        <title>Cloning and analysis of the nuclear genes for two mitochondrial ribosomal proteins in yeast.</title>
        <authorList>
            <person name="Matsushita Y."/>
            <person name="Kitakawa M."/>
            <person name="Isono K."/>
        </authorList>
    </citation>
    <scope>NUCLEOTIDE SEQUENCE [GENOMIC DNA]</scope>
    <scope>PROTEIN SEQUENCE OF 1-28</scope>
    <source>
        <strain>ATCC 64665 / S288c / DC5</strain>
    </source>
</reference>
<reference key="2">
    <citation type="journal article" date="1997" name="Nature">
        <title>The nucleotide sequence of Saccharomyces cerevisiae chromosome XIII.</title>
        <authorList>
            <person name="Bowman S."/>
            <person name="Churcher C.M."/>
            <person name="Badcock K."/>
            <person name="Brown D."/>
            <person name="Chillingworth T."/>
            <person name="Connor R."/>
            <person name="Dedman K."/>
            <person name="Devlin K."/>
            <person name="Gentles S."/>
            <person name="Hamlin N."/>
            <person name="Hunt S."/>
            <person name="Jagels K."/>
            <person name="Lye G."/>
            <person name="Moule S."/>
            <person name="Odell C."/>
            <person name="Pearson D."/>
            <person name="Rajandream M.A."/>
            <person name="Rice P."/>
            <person name="Skelton J."/>
            <person name="Walsh S.V."/>
            <person name="Whitehead S."/>
            <person name="Barrell B.G."/>
        </authorList>
    </citation>
    <scope>NUCLEOTIDE SEQUENCE [LARGE SCALE GENOMIC DNA]</scope>
    <source>
        <strain>ATCC 204508 / S288c</strain>
    </source>
</reference>
<reference key="3">
    <citation type="journal article" date="2014" name="G3 (Bethesda)">
        <title>The reference genome sequence of Saccharomyces cerevisiae: Then and now.</title>
        <authorList>
            <person name="Engel S.R."/>
            <person name="Dietrich F.S."/>
            <person name="Fisk D.G."/>
            <person name="Binkley G."/>
            <person name="Balakrishnan R."/>
            <person name="Costanzo M.C."/>
            <person name="Dwight S.S."/>
            <person name="Hitz B.C."/>
            <person name="Karra K."/>
            <person name="Nash R.S."/>
            <person name="Weng S."/>
            <person name="Wong E.D."/>
            <person name="Lloyd P."/>
            <person name="Skrzypek M.S."/>
            <person name="Miyasato S.R."/>
            <person name="Simison M."/>
            <person name="Cherry J.M."/>
        </authorList>
    </citation>
    <scope>GENOME REANNOTATION</scope>
    <source>
        <strain>ATCC 204508 / S288c</strain>
    </source>
</reference>
<reference key="4">
    <citation type="journal article" date="1991" name="FEBS Lett.">
        <title>Extended N-terminal sequencing of proteins of the large ribosomal subunit from yeast mitochondria.</title>
        <authorList>
            <person name="Grohmann L."/>
            <person name="Graack H.-R."/>
            <person name="Kruft V."/>
            <person name="Choli T."/>
            <person name="Goldschmidt-Reisin S."/>
            <person name="Kitakawa M."/>
        </authorList>
    </citation>
    <scope>PROTEIN SEQUENCE OF 1-6 AND 22-27</scope>
    <scope>SUBUNIT</scope>
    <source>
        <strain>07173</strain>
    </source>
</reference>
<reference key="5">
    <citation type="journal article" date="2003" name="Nature">
        <title>Global analysis of protein localization in budding yeast.</title>
        <authorList>
            <person name="Huh W.-K."/>
            <person name="Falvo J.V."/>
            <person name="Gerke L.C."/>
            <person name="Carroll A.S."/>
            <person name="Howson R.W."/>
            <person name="Weissman J.S."/>
            <person name="O'Shea E.K."/>
        </authorList>
    </citation>
    <scope>SUBCELLULAR LOCATION [LARGE SCALE ANALYSIS]</scope>
</reference>
<reference key="6">
    <citation type="journal article" date="2003" name="Nature">
        <title>Global analysis of protein expression in yeast.</title>
        <authorList>
            <person name="Ghaemmaghami S."/>
            <person name="Huh W.-K."/>
            <person name="Bower K."/>
            <person name="Howson R.W."/>
            <person name="Belle A."/>
            <person name="Dephoure N."/>
            <person name="O'Shea E.K."/>
            <person name="Weissman J.S."/>
        </authorList>
    </citation>
    <scope>LEVEL OF PROTEIN EXPRESSION [LARGE SCALE ANALYSIS]</scope>
</reference>
<reference key="7">
    <citation type="journal article" date="2003" name="Proc. Natl. Acad. Sci. U.S.A.">
        <title>The proteome of Saccharomyces cerevisiae mitochondria.</title>
        <authorList>
            <person name="Sickmann A."/>
            <person name="Reinders J."/>
            <person name="Wagner Y."/>
            <person name="Joppich C."/>
            <person name="Zahedi R.P."/>
            <person name="Meyer H.E."/>
            <person name="Schoenfisch B."/>
            <person name="Perschil I."/>
            <person name="Chacinska A."/>
            <person name="Guiard B."/>
            <person name="Rehling P."/>
            <person name="Pfanner N."/>
            <person name="Meisinger C."/>
        </authorList>
    </citation>
    <scope>SUBCELLULAR LOCATION [LARGE SCALE ANALYSIS]</scope>
    <source>
        <strain>ATCC 76625 / YPH499</strain>
    </source>
</reference>
<reference key="8">
    <citation type="journal article" date="2014" name="Science">
        <title>Structure of the yeast mitochondrial large ribosomal subunit.</title>
        <authorList>
            <person name="Amunts A."/>
            <person name="Brown A."/>
            <person name="Bai X.C."/>
            <person name="Llacer J.L."/>
            <person name="Hussain T."/>
            <person name="Emsley P."/>
            <person name="Long F."/>
            <person name="Murshudov G."/>
            <person name="Scheres S.H."/>
            <person name="Ramakrishnan V."/>
        </authorList>
    </citation>
    <scope>SUBUNIT</scope>
    <scope>IDENTIFICATION BY MASS SPECTROMETRY</scope>
</reference>
<reference key="9">
    <citation type="journal article" date="2015" name="Nat. Commun.">
        <title>Organization of the mitochondrial translation machinery studied in situ by cryoelectron tomography.</title>
        <authorList>
            <person name="Pfeffer S."/>
            <person name="Woellhaf M.W."/>
            <person name="Herrmann J.M."/>
            <person name="Forster F."/>
        </authorList>
    </citation>
    <scope>SUBCELLULAR LOCATION</scope>
</reference>
<dbReference type="EMBL" id="X17552">
    <property type="protein sequence ID" value="CAA35588.1"/>
    <property type="molecule type" value="Genomic_DNA"/>
</dbReference>
<dbReference type="EMBL" id="Z49939">
    <property type="protein sequence ID" value="CAA90196.1"/>
    <property type="molecule type" value="Genomic_DNA"/>
</dbReference>
<dbReference type="EMBL" id="BK006946">
    <property type="protein sequence ID" value="DAA10124.1"/>
    <property type="molecule type" value="Genomic_DNA"/>
</dbReference>
<dbReference type="PIR" id="JQ0369">
    <property type="entry name" value="JQ0369"/>
</dbReference>
<dbReference type="RefSeq" id="NP_013952.1">
    <property type="nucleotide sequence ID" value="NM_001182732.1"/>
</dbReference>
<dbReference type="SMR" id="P19956"/>
<dbReference type="BioGRID" id="35403">
    <property type="interactions" value="62"/>
</dbReference>
<dbReference type="ComplexPortal" id="CPX-1602">
    <property type="entry name" value="54S mitochondrial large ribosomal subunit"/>
</dbReference>
<dbReference type="DIP" id="DIP-6652N"/>
<dbReference type="FunCoup" id="P19956">
    <property type="interactions" value="137"/>
</dbReference>
<dbReference type="IntAct" id="P19956">
    <property type="interactions" value="4"/>
</dbReference>
<dbReference type="STRING" id="4932.YMR225C"/>
<dbReference type="PaxDb" id="4932-YMR225C"/>
<dbReference type="PeptideAtlas" id="P19956"/>
<dbReference type="EnsemblFungi" id="YMR225C_mRNA">
    <property type="protein sequence ID" value="YMR225C"/>
    <property type="gene ID" value="YMR225C"/>
</dbReference>
<dbReference type="GeneID" id="855265"/>
<dbReference type="KEGG" id="sce:YMR225C"/>
<dbReference type="AGR" id="SGD:S000004838"/>
<dbReference type="SGD" id="S000004838">
    <property type="gene designation" value="MRPL44"/>
</dbReference>
<dbReference type="VEuPathDB" id="FungiDB:YMR225C"/>
<dbReference type="eggNOG" id="ENOG502S452">
    <property type="taxonomic scope" value="Eukaryota"/>
</dbReference>
<dbReference type="HOGENOM" id="CLU_131037_1_0_1"/>
<dbReference type="InParanoid" id="P19956"/>
<dbReference type="OMA" id="MDFNCSK"/>
<dbReference type="OrthoDB" id="4136894at2759"/>
<dbReference type="BioCyc" id="YEAST:G3O-32906-MONOMER"/>
<dbReference type="BioGRID-ORCS" id="855265">
    <property type="hits" value="1 hit in 10 CRISPR screens"/>
</dbReference>
<dbReference type="PRO" id="PR:P19956"/>
<dbReference type="Proteomes" id="UP000002311">
    <property type="component" value="Chromosome XIII"/>
</dbReference>
<dbReference type="RNAct" id="P19956">
    <property type="molecule type" value="protein"/>
</dbReference>
<dbReference type="GO" id="GO:0005743">
    <property type="term" value="C:mitochondrial inner membrane"/>
    <property type="evidence" value="ECO:0000303"/>
    <property type="project" value="ComplexPortal"/>
</dbReference>
<dbReference type="GO" id="GO:0005762">
    <property type="term" value="C:mitochondrial large ribosomal subunit"/>
    <property type="evidence" value="ECO:0000314"/>
    <property type="project" value="SGD"/>
</dbReference>
<dbReference type="GO" id="GO:0005739">
    <property type="term" value="C:mitochondrion"/>
    <property type="evidence" value="ECO:0007005"/>
    <property type="project" value="SGD"/>
</dbReference>
<dbReference type="GO" id="GO:0003735">
    <property type="term" value="F:structural constituent of ribosome"/>
    <property type="evidence" value="ECO:0000314"/>
    <property type="project" value="SGD"/>
</dbReference>
<dbReference type="GO" id="GO:0032543">
    <property type="term" value="P:mitochondrial translation"/>
    <property type="evidence" value="ECO:0000303"/>
    <property type="project" value="ComplexPortal"/>
</dbReference>
<dbReference type="FunFam" id="3.40.30.10:FF:000260">
    <property type="entry name" value="Mitochondrial ribosomal protein L44"/>
    <property type="match status" value="1"/>
</dbReference>
<dbReference type="Gene3D" id="3.40.30.10">
    <property type="entry name" value="Glutaredoxin"/>
    <property type="match status" value="1"/>
</dbReference>
<dbReference type="InterPro" id="IPR019716">
    <property type="entry name" value="Ribosomal_mL53"/>
</dbReference>
<dbReference type="InterPro" id="IPR042776">
    <property type="entry name" value="Ribosomal_mL53_fung"/>
</dbReference>
<dbReference type="PANTHER" id="PTHR28236">
    <property type="entry name" value="54S RIBOSOMAL PROTEIN L44, MITOCHONDRIAL"/>
    <property type="match status" value="1"/>
</dbReference>
<dbReference type="PANTHER" id="PTHR28236:SF1">
    <property type="entry name" value="LARGE RIBOSOMAL SUBUNIT PROTEIN ML53"/>
    <property type="match status" value="1"/>
</dbReference>
<dbReference type="Pfam" id="PF10780">
    <property type="entry name" value="MRP_L53"/>
    <property type="match status" value="1"/>
</dbReference>
<keyword id="KW-0903">Direct protein sequencing</keyword>
<keyword id="KW-0496">Mitochondrion</keyword>
<keyword id="KW-1185">Reference proteome</keyword>
<keyword id="KW-0687">Ribonucleoprotein</keyword>
<keyword id="KW-0689">Ribosomal protein</keyword>
<organism>
    <name type="scientific">Saccharomyces cerevisiae (strain ATCC 204508 / S288c)</name>
    <name type="common">Baker's yeast</name>
    <dbReference type="NCBI Taxonomy" id="559292"/>
    <lineage>
        <taxon>Eukaryota</taxon>
        <taxon>Fungi</taxon>
        <taxon>Dikarya</taxon>
        <taxon>Ascomycota</taxon>
        <taxon>Saccharomycotina</taxon>
        <taxon>Saccharomycetes</taxon>
        <taxon>Saccharomycetales</taxon>
        <taxon>Saccharomycetaceae</taxon>
        <taxon>Saccharomyces</taxon>
    </lineage>
</organism>
<accession>P19956</accession>
<accession>D6W050</accession>
<protein>
    <recommendedName>
        <fullName evidence="7">Large ribosomal subunit protein mL53</fullName>
    </recommendedName>
    <alternativeName>
        <fullName>54S ribosomal protein L44, mitochondrial</fullName>
    </alternativeName>
    <alternativeName>
        <fullName>YmL44</fullName>
    </alternativeName>
</protein>
<proteinExistence type="evidence at protein level"/>
<feature type="chain" id="PRO_0000087696" description="Large ribosomal subunit protein mL53">
    <location>
        <begin position="1"/>
        <end position="98"/>
    </location>
</feature>